<sequence>MKTDIEIAQSIELKPIVDVVEKLGISYDDLELYGKYKAKLSFDKIRAVESNPVGKLILVTAINPTPAGEGKSTLTIGLADALNKIGKKTMIAIREPSLGPVMGIKGGAAGGGYAQVLPMEDINLHFTGDMHAITTANNALSALIDNHLHQGNELGIDQRRILWKRVVDLNDRTLRHVTVGLGGPLNGIPREDGFDITVASEIMAILCLATDIEDLKRRLANIVIGYRYDRTPVSVGDLQVEGALALILKDAIKPNLVQTIYGTPAFVHGGPFANIAHGCNSVLATTTALHLADYTVTEAGFGADLGAEKFLDIKTPNLPTSPDAVVIVATLRALKMNGGVAKDALTEENVEAVRAGFANLKRHVENIRKFGIPAVVAINEFVSDTEAEIAALKELCASIDVPVELASVWADGAEGGVALAETVVKTIAENPANYKRLYDNDLSVQEKIEKIVTEIYRGSKVNFEKKAQTQIAQIVQNGWDKLPICMAKTQYSFSDNPNALGAPENFEITIRELVPKLGAGFIVALTGDVMTMPGLPKRPAALNMDVESDGTVLGLF</sequence>
<gene>
    <name evidence="1" type="primary">fhs</name>
    <name type="ordered locus">SP_1229</name>
</gene>
<reference key="1">
    <citation type="journal article" date="2001" name="Science">
        <title>Complete genome sequence of a virulent isolate of Streptococcus pneumoniae.</title>
        <authorList>
            <person name="Tettelin H."/>
            <person name="Nelson K.E."/>
            <person name="Paulsen I.T."/>
            <person name="Eisen J.A."/>
            <person name="Read T.D."/>
            <person name="Peterson S.N."/>
            <person name="Heidelberg J.F."/>
            <person name="DeBoy R.T."/>
            <person name="Haft D.H."/>
            <person name="Dodson R.J."/>
            <person name="Durkin A.S."/>
            <person name="Gwinn M.L."/>
            <person name="Kolonay J.F."/>
            <person name="Nelson W.C."/>
            <person name="Peterson J.D."/>
            <person name="Umayam L.A."/>
            <person name="White O."/>
            <person name="Salzberg S.L."/>
            <person name="Lewis M.R."/>
            <person name="Radune D."/>
            <person name="Holtzapple E.K."/>
            <person name="Khouri H.M."/>
            <person name="Wolf A.M."/>
            <person name="Utterback T.R."/>
            <person name="Hansen C.L."/>
            <person name="McDonald L.A."/>
            <person name="Feldblyum T.V."/>
            <person name="Angiuoli S.V."/>
            <person name="Dickinson T."/>
            <person name="Hickey E.K."/>
            <person name="Holt I.E."/>
            <person name="Loftus B.J."/>
            <person name="Yang F."/>
            <person name="Smith H.O."/>
            <person name="Venter J.C."/>
            <person name="Dougherty B.A."/>
            <person name="Morrison D.A."/>
            <person name="Hollingshead S.K."/>
            <person name="Fraser C.M."/>
        </authorList>
    </citation>
    <scope>NUCLEOTIDE SEQUENCE [LARGE SCALE GENOMIC DNA]</scope>
    <source>
        <strain>ATCC BAA-334 / TIGR4</strain>
    </source>
</reference>
<proteinExistence type="inferred from homology"/>
<organism>
    <name type="scientific">Streptococcus pneumoniae serotype 4 (strain ATCC BAA-334 / TIGR4)</name>
    <dbReference type="NCBI Taxonomy" id="170187"/>
    <lineage>
        <taxon>Bacteria</taxon>
        <taxon>Bacillati</taxon>
        <taxon>Bacillota</taxon>
        <taxon>Bacilli</taxon>
        <taxon>Lactobacillales</taxon>
        <taxon>Streptococcaceae</taxon>
        <taxon>Streptococcus</taxon>
    </lineage>
</organism>
<keyword id="KW-0067">ATP-binding</keyword>
<keyword id="KW-0436">Ligase</keyword>
<keyword id="KW-0547">Nucleotide-binding</keyword>
<keyword id="KW-0554">One-carbon metabolism</keyword>
<keyword id="KW-1185">Reference proteome</keyword>
<name>FTHS_STRPN</name>
<accession>Q97QI2</accession>
<comment type="catalytic activity">
    <reaction evidence="1">
        <text>(6S)-5,6,7,8-tetrahydrofolate + formate + ATP = (6R)-10-formyltetrahydrofolate + ADP + phosphate</text>
        <dbReference type="Rhea" id="RHEA:20221"/>
        <dbReference type="ChEBI" id="CHEBI:15740"/>
        <dbReference type="ChEBI" id="CHEBI:30616"/>
        <dbReference type="ChEBI" id="CHEBI:43474"/>
        <dbReference type="ChEBI" id="CHEBI:57453"/>
        <dbReference type="ChEBI" id="CHEBI:195366"/>
        <dbReference type="ChEBI" id="CHEBI:456216"/>
        <dbReference type="EC" id="6.3.4.3"/>
    </reaction>
</comment>
<comment type="pathway">
    <text evidence="1">One-carbon metabolism; tetrahydrofolate interconversion.</text>
</comment>
<comment type="similarity">
    <text evidence="1">Belongs to the formate--tetrahydrofolate ligase family.</text>
</comment>
<protein>
    <recommendedName>
        <fullName evidence="1">Formate--tetrahydrofolate ligase</fullName>
        <ecNumber evidence="1">6.3.4.3</ecNumber>
    </recommendedName>
    <alternativeName>
        <fullName evidence="1">Formyltetrahydrofolate synthetase</fullName>
        <shortName evidence="1">FHS</shortName>
        <shortName evidence="1">FTHFS</shortName>
    </alternativeName>
</protein>
<dbReference type="EC" id="6.3.4.3" evidence="1"/>
<dbReference type="EMBL" id="AE005672">
    <property type="protein sequence ID" value="AAK75335.1"/>
    <property type="molecule type" value="Genomic_DNA"/>
</dbReference>
<dbReference type="PIR" id="F95142">
    <property type="entry name" value="F95142"/>
</dbReference>
<dbReference type="RefSeq" id="WP_000845295.1">
    <property type="nucleotide sequence ID" value="NZ_CP155539.1"/>
</dbReference>
<dbReference type="SMR" id="Q97QI2"/>
<dbReference type="PaxDb" id="170187-SP_1229"/>
<dbReference type="EnsemblBacteria" id="AAK75335">
    <property type="protein sequence ID" value="AAK75335"/>
    <property type="gene ID" value="SP_1229"/>
</dbReference>
<dbReference type="KEGG" id="spn:SP_1229"/>
<dbReference type="eggNOG" id="COG2759">
    <property type="taxonomic scope" value="Bacteria"/>
</dbReference>
<dbReference type="PhylomeDB" id="Q97QI2"/>
<dbReference type="BioCyc" id="SPNE170187:G1FZB-1244-MONOMER"/>
<dbReference type="UniPathway" id="UPA00193"/>
<dbReference type="Proteomes" id="UP000000585">
    <property type="component" value="Chromosome"/>
</dbReference>
<dbReference type="GO" id="GO:0005524">
    <property type="term" value="F:ATP binding"/>
    <property type="evidence" value="ECO:0007669"/>
    <property type="project" value="UniProtKB-UniRule"/>
</dbReference>
<dbReference type="GO" id="GO:0004329">
    <property type="term" value="F:formate-tetrahydrofolate ligase activity"/>
    <property type="evidence" value="ECO:0007669"/>
    <property type="project" value="UniProtKB-UniRule"/>
</dbReference>
<dbReference type="GO" id="GO:0035999">
    <property type="term" value="P:tetrahydrofolate interconversion"/>
    <property type="evidence" value="ECO:0007669"/>
    <property type="project" value="UniProtKB-UniRule"/>
</dbReference>
<dbReference type="CDD" id="cd00477">
    <property type="entry name" value="FTHFS"/>
    <property type="match status" value="1"/>
</dbReference>
<dbReference type="FunFam" id="3.30.1510.10:FF:000001">
    <property type="entry name" value="Formate--tetrahydrofolate ligase"/>
    <property type="match status" value="1"/>
</dbReference>
<dbReference type="FunFam" id="3.10.410.10:FF:000001">
    <property type="entry name" value="Putative formate--tetrahydrofolate ligase"/>
    <property type="match status" value="1"/>
</dbReference>
<dbReference type="Gene3D" id="3.30.1510.10">
    <property type="entry name" value="Domain 2, N(10)-formyltetrahydrofolate synthetase"/>
    <property type="match status" value="1"/>
</dbReference>
<dbReference type="Gene3D" id="3.10.410.10">
    <property type="entry name" value="Formyltetrahydrofolate synthetase, domain 3"/>
    <property type="match status" value="1"/>
</dbReference>
<dbReference type="Gene3D" id="3.40.50.300">
    <property type="entry name" value="P-loop containing nucleotide triphosphate hydrolases"/>
    <property type="match status" value="1"/>
</dbReference>
<dbReference type="HAMAP" id="MF_01543">
    <property type="entry name" value="FTHFS"/>
    <property type="match status" value="1"/>
</dbReference>
<dbReference type="InterPro" id="IPR000559">
    <property type="entry name" value="Formate_THF_ligase"/>
</dbReference>
<dbReference type="InterPro" id="IPR020628">
    <property type="entry name" value="Formate_THF_ligase_CS"/>
</dbReference>
<dbReference type="InterPro" id="IPR027417">
    <property type="entry name" value="P-loop_NTPase"/>
</dbReference>
<dbReference type="NCBIfam" id="NF010030">
    <property type="entry name" value="PRK13505.1"/>
    <property type="match status" value="1"/>
</dbReference>
<dbReference type="Pfam" id="PF01268">
    <property type="entry name" value="FTHFS"/>
    <property type="match status" value="1"/>
</dbReference>
<dbReference type="SUPFAM" id="SSF52540">
    <property type="entry name" value="P-loop containing nucleoside triphosphate hydrolases"/>
    <property type="match status" value="1"/>
</dbReference>
<dbReference type="PROSITE" id="PS00721">
    <property type="entry name" value="FTHFS_1"/>
    <property type="match status" value="1"/>
</dbReference>
<dbReference type="PROSITE" id="PS00722">
    <property type="entry name" value="FTHFS_2"/>
    <property type="match status" value="1"/>
</dbReference>
<feature type="chain" id="PRO_0000199387" description="Formate--tetrahydrofolate ligase">
    <location>
        <begin position="1"/>
        <end position="556"/>
    </location>
</feature>
<feature type="binding site" evidence="1">
    <location>
        <begin position="65"/>
        <end position="72"/>
    </location>
    <ligand>
        <name>ATP</name>
        <dbReference type="ChEBI" id="CHEBI:30616"/>
    </ligand>
</feature>
<evidence type="ECO:0000255" key="1">
    <source>
        <dbReference type="HAMAP-Rule" id="MF_01543"/>
    </source>
</evidence>